<keyword id="KW-0496">Mitochondrion</keyword>
<keyword id="KW-1185">Reference proteome</keyword>
<reference key="1">
    <citation type="journal article" date="2004" name="Nature">
        <title>Genome evolution in yeasts.</title>
        <authorList>
            <person name="Dujon B."/>
            <person name="Sherman D."/>
            <person name="Fischer G."/>
            <person name="Durrens P."/>
            <person name="Casaregola S."/>
            <person name="Lafontaine I."/>
            <person name="de Montigny J."/>
            <person name="Marck C."/>
            <person name="Neuveglise C."/>
            <person name="Talla E."/>
            <person name="Goffard N."/>
            <person name="Frangeul L."/>
            <person name="Aigle M."/>
            <person name="Anthouard V."/>
            <person name="Babour A."/>
            <person name="Barbe V."/>
            <person name="Barnay S."/>
            <person name="Blanchin S."/>
            <person name="Beckerich J.-M."/>
            <person name="Beyne E."/>
            <person name="Bleykasten C."/>
            <person name="Boisrame A."/>
            <person name="Boyer J."/>
            <person name="Cattolico L."/>
            <person name="Confanioleri F."/>
            <person name="de Daruvar A."/>
            <person name="Despons L."/>
            <person name="Fabre E."/>
            <person name="Fairhead C."/>
            <person name="Ferry-Dumazet H."/>
            <person name="Groppi A."/>
            <person name="Hantraye F."/>
            <person name="Hennequin C."/>
            <person name="Jauniaux N."/>
            <person name="Joyet P."/>
            <person name="Kachouri R."/>
            <person name="Kerrest A."/>
            <person name="Koszul R."/>
            <person name="Lemaire M."/>
            <person name="Lesur I."/>
            <person name="Ma L."/>
            <person name="Muller H."/>
            <person name="Nicaud J.-M."/>
            <person name="Nikolski M."/>
            <person name="Oztas S."/>
            <person name="Ozier-Kalogeropoulos O."/>
            <person name="Pellenz S."/>
            <person name="Potier S."/>
            <person name="Richard G.-F."/>
            <person name="Straub M.-L."/>
            <person name="Suleau A."/>
            <person name="Swennen D."/>
            <person name="Tekaia F."/>
            <person name="Wesolowski-Louvel M."/>
            <person name="Westhof E."/>
            <person name="Wirth B."/>
            <person name="Zeniou-Meyer M."/>
            <person name="Zivanovic Y."/>
            <person name="Bolotin-Fukuhara M."/>
            <person name="Thierry A."/>
            <person name="Bouchier C."/>
            <person name="Caudron B."/>
            <person name="Scarpelli C."/>
            <person name="Gaillardin C."/>
            <person name="Weissenbach J."/>
            <person name="Wincker P."/>
            <person name="Souciet J.-L."/>
        </authorList>
    </citation>
    <scope>NUCLEOTIDE SEQUENCE [LARGE SCALE GENOMIC DNA]</scope>
    <source>
        <strain>ATCC 2001 / BCRC 20586 / JCM 3761 / NBRC 0622 / NRRL Y-65 / CBS 138</strain>
    </source>
</reference>
<gene>
    <name type="primary">OXR1</name>
    <name type="ordered locus">CAGL0G09152g</name>
</gene>
<dbReference type="EMBL" id="CR380953">
    <property type="protein sequence ID" value="CAG59686.1"/>
    <property type="molecule type" value="Genomic_DNA"/>
</dbReference>
<dbReference type="RefSeq" id="XP_446759.1">
    <property type="nucleotide sequence ID" value="XM_446759.1"/>
</dbReference>
<dbReference type="SMR" id="Q6FSN5"/>
<dbReference type="FunCoup" id="Q6FSN5">
    <property type="interactions" value="25"/>
</dbReference>
<dbReference type="STRING" id="284593.Q6FSN5"/>
<dbReference type="EnsemblFungi" id="CAGL0G09152g-T">
    <property type="protein sequence ID" value="CAGL0G09152g-T-p1"/>
    <property type="gene ID" value="CAGL0G09152g"/>
</dbReference>
<dbReference type="KEGG" id="cgr:2888044"/>
<dbReference type="CGD" id="CAL0130540">
    <property type="gene designation" value="CAGL0G09152g"/>
</dbReference>
<dbReference type="VEuPathDB" id="FungiDB:CAGL0G09152g"/>
<dbReference type="eggNOG" id="KOG2372">
    <property type="taxonomic scope" value="Eukaryota"/>
</dbReference>
<dbReference type="HOGENOM" id="CLU_029204_0_0_1"/>
<dbReference type="InParanoid" id="Q6FSN5"/>
<dbReference type="Proteomes" id="UP000002428">
    <property type="component" value="Chromosome G"/>
</dbReference>
<dbReference type="GO" id="GO:0005739">
    <property type="term" value="C:mitochondrion"/>
    <property type="evidence" value="ECO:0007669"/>
    <property type="project" value="UniProtKB-SubCell"/>
</dbReference>
<dbReference type="GO" id="GO:0005634">
    <property type="term" value="C:nucleus"/>
    <property type="evidence" value="ECO:0007669"/>
    <property type="project" value="TreeGrafter"/>
</dbReference>
<dbReference type="GO" id="GO:0045053">
    <property type="term" value="P:protein retention in Golgi apparatus"/>
    <property type="evidence" value="ECO:0007669"/>
    <property type="project" value="EnsemblFungi"/>
</dbReference>
<dbReference type="GO" id="GO:0032984">
    <property type="term" value="P:protein-containing complex disassembly"/>
    <property type="evidence" value="ECO:0007669"/>
    <property type="project" value="EnsemblFungi"/>
</dbReference>
<dbReference type="GO" id="GO:0006979">
    <property type="term" value="P:response to oxidative stress"/>
    <property type="evidence" value="ECO:0007669"/>
    <property type="project" value="TreeGrafter"/>
</dbReference>
<dbReference type="InterPro" id="IPR006571">
    <property type="entry name" value="TLDc_dom"/>
</dbReference>
<dbReference type="PANTHER" id="PTHR23354:SF62">
    <property type="entry name" value="MUSTARD, ISOFORM V"/>
    <property type="match status" value="1"/>
</dbReference>
<dbReference type="PANTHER" id="PTHR23354">
    <property type="entry name" value="NUCLEOLAR PROTEIN 7/ESTROGEN RECEPTOR COACTIVATOR-RELATED"/>
    <property type="match status" value="1"/>
</dbReference>
<dbReference type="Pfam" id="PF07534">
    <property type="entry name" value="TLD"/>
    <property type="match status" value="2"/>
</dbReference>
<dbReference type="SMART" id="SM00584">
    <property type="entry name" value="TLDc"/>
    <property type="match status" value="1"/>
</dbReference>
<dbReference type="PROSITE" id="PS51886">
    <property type="entry name" value="TLDC"/>
    <property type="match status" value="1"/>
</dbReference>
<evidence type="ECO:0000250" key="1"/>
<evidence type="ECO:0000255" key="2">
    <source>
        <dbReference type="PROSITE-ProRule" id="PRU01234"/>
    </source>
</evidence>
<evidence type="ECO:0000256" key="3">
    <source>
        <dbReference type="SAM" id="MobiDB-lite"/>
    </source>
</evidence>
<evidence type="ECO:0000305" key="4"/>
<protein>
    <recommendedName>
        <fullName>Oxidation resistance protein 1</fullName>
    </recommendedName>
</protein>
<name>OXR1_CANGA</name>
<proteinExistence type="inferred from homology"/>
<sequence length="271" mass="31152">MFNVKGALNRLRTTWSNSEESDRDPRHLKSSDDLSNYTGSRMSYEETLPPVTLLGYSPKTKNRLLHPEMCDELRPLMPTRIQLYTEWTLLYSLEQHGASLHSLYDKLREDASTPRRVGYVLVIKDRKDGIFGAYSNEPFHPHEHMRYSGNGECFLWKMESVPNKILRAKIREDKDEDLIDVNDDEDKINNSGTVNESWKLCAYPYTGANDFMIYCTSKFLSLGAGEGHYGLWCDDGLMKGVTNPTQTYGNDVLSREGRKFTIMGLEVWRVG</sequence>
<organism>
    <name type="scientific">Candida glabrata (strain ATCC 2001 / BCRC 20586 / JCM 3761 / NBRC 0622 / NRRL Y-65 / CBS 138)</name>
    <name type="common">Yeast</name>
    <name type="synonym">Nakaseomyces glabratus</name>
    <dbReference type="NCBI Taxonomy" id="284593"/>
    <lineage>
        <taxon>Eukaryota</taxon>
        <taxon>Fungi</taxon>
        <taxon>Dikarya</taxon>
        <taxon>Ascomycota</taxon>
        <taxon>Saccharomycotina</taxon>
        <taxon>Saccharomycetes</taxon>
        <taxon>Saccharomycetales</taxon>
        <taxon>Saccharomycetaceae</taxon>
        <taxon>Nakaseomyces</taxon>
    </lineage>
</organism>
<accession>Q6FSN5</accession>
<comment type="function">
    <text evidence="1">May be involved in protection from oxidative damage.</text>
</comment>
<comment type="subcellular location">
    <subcellularLocation>
        <location evidence="1">Mitochondrion</location>
    </subcellularLocation>
</comment>
<comment type="similarity">
    <text evidence="4">Belongs to the OXR1 family.</text>
</comment>
<feature type="chain" id="PRO_0000058112" description="Oxidation resistance protein 1">
    <location>
        <begin position="1"/>
        <end position="271"/>
    </location>
</feature>
<feature type="domain" description="TLDc" evidence="2">
    <location>
        <begin position="63"/>
        <end position="271"/>
    </location>
</feature>
<feature type="region of interest" description="Disordered" evidence="3">
    <location>
        <begin position="15"/>
        <end position="41"/>
    </location>
</feature>
<feature type="compositionally biased region" description="Basic and acidic residues" evidence="3">
    <location>
        <begin position="23"/>
        <end position="32"/>
    </location>
</feature>